<proteinExistence type="evidence at transcript level"/>
<keyword id="KW-0479">Metal-binding</keyword>
<keyword id="KW-0507">mRNA processing</keyword>
<keyword id="KW-0508">mRNA splicing</keyword>
<keyword id="KW-0597">Phosphoprotein</keyword>
<keyword id="KW-1185">Reference proteome</keyword>
<keyword id="KW-0862">Zinc</keyword>
<keyword id="KW-0863">Zinc-finger</keyword>
<feature type="chain" id="PRO_0000311924" description="Protein SREK1IP1">
    <location>
        <begin position="1"/>
        <end position="153"/>
    </location>
</feature>
<feature type="zinc finger region" description="CCHC-type" evidence="4">
    <location>
        <begin position="13"/>
        <end position="30"/>
    </location>
</feature>
<feature type="region of interest" description="Disordered" evidence="5">
    <location>
        <begin position="44"/>
        <end position="153"/>
    </location>
</feature>
<feature type="compositionally biased region" description="Basic and acidic residues" evidence="5">
    <location>
        <begin position="66"/>
        <end position="84"/>
    </location>
</feature>
<feature type="compositionally biased region" description="Basic residues" evidence="5">
    <location>
        <begin position="85"/>
        <end position="94"/>
    </location>
</feature>
<feature type="compositionally biased region" description="Basic residues" evidence="5">
    <location>
        <begin position="106"/>
        <end position="141"/>
    </location>
</feature>
<feature type="modified residue" description="Phosphoserine" evidence="3">
    <location>
        <position position="52"/>
    </location>
</feature>
<feature type="modified residue" description="Phosphoserine" evidence="2">
    <location>
        <position position="96"/>
    </location>
</feature>
<feature type="modified residue" description="Phosphoserine" evidence="2">
    <location>
        <position position="97"/>
    </location>
</feature>
<comment type="function">
    <text evidence="1">Possible splicing regulator involved in the control of cellular survival.</text>
</comment>
<comment type="subunit">
    <text evidence="1">Interacts with SREK1/SFRS12.</text>
</comment>
<name>SR1IP_RAT</name>
<protein>
    <recommendedName>
        <fullName>Protein SREK1IP1</fullName>
    </recommendedName>
    <alternativeName>
        <fullName>SFRS12-interacting protein 1</fullName>
    </alternativeName>
    <alternativeName>
        <fullName>SREK1-interacting protein 1</fullName>
    </alternativeName>
</protein>
<accession>Q5RJP9</accession>
<gene>
    <name type="primary">Srek1ip1</name>
    <name type="synonym">Sfrs12ip1</name>
</gene>
<dbReference type="EMBL" id="AY236996">
    <property type="protein sequence ID" value="AAP69947.1"/>
    <property type="molecule type" value="mRNA"/>
</dbReference>
<dbReference type="EMBL" id="BC086553">
    <property type="protein sequence ID" value="AAH86553.1"/>
    <property type="molecule type" value="mRNA"/>
</dbReference>
<dbReference type="RefSeq" id="NP_001008374.1">
    <property type="nucleotide sequence ID" value="NM_001008373.2"/>
</dbReference>
<dbReference type="STRING" id="10116.ENSRNOP00000064069"/>
<dbReference type="PhosphoSitePlus" id="Q5RJP9"/>
<dbReference type="PaxDb" id="10116-ENSRNOP00000064069"/>
<dbReference type="GeneID" id="361888"/>
<dbReference type="KEGG" id="rno:361888"/>
<dbReference type="UCSC" id="RGD:1305356">
    <property type="organism name" value="rat"/>
</dbReference>
<dbReference type="AGR" id="RGD:1305356"/>
<dbReference type="CTD" id="285672"/>
<dbReference type="RGD" id="1305356">
    <property type="gene designation" value="Srek1ip1"/>
</dbReference>
<dbReference type="eggNOG" id="KOG2985">
    <property type="taxonomic scope" value="Eukaryota"/>
</dbReference>
<dbReference type="InParanoid" id="Q5RJP9"/>
<dbReference type="OrthoDB" id="5596742at2759"/>
<dbReference type="PRO" id="PR:Q5RJP9"/>
<dbReference type="Proteomes" id="UP000002494">
    <property type="component" value="Unplaced"/>
</dbReference>
<dbReference type="GO" id="GO:0003676">
    <property type="term" value="F:nucleic acid binding"/>
    <property type="evidence" value="ECO:0007669"/>
    <property type="project" value="InterPro"/>
</dbReference>
<dbReference type="GO" id="GO:0008270">
    <property type="term" value="F:zinc ion binding"/>
    <property type="evidence" value="ECO:0007669"/>
    <property type="project" value="UniProtKB-KW"/>
</dbReference>
<dbReference type="GO" id="GO:0006397">
    <property type="term" value="P:mRNA processing"/>
    <property type="evidence" value="ECO:0007669"/>
    <property type="project" value="UniProtKB-KW"/>
</dbReference>
<dbReference type="GO" id="GO:0008380">
    <property type="term" value="P:RNA splicing"/>
    <property type="evidence" value="ECO:0007669"/>
    <property type="project" value="UniProtKB-KW"/>
</dbReference>
<dbReference type="InterPro" id="IPR001878">
    <property type="entry name" value="Znf_CCHC"/>
</dbReference>
<dbReference type="PANTHER" id="PTHR31437:SF1">
    <property type="entry name" value="PROTEIN SREK1IP1"/>
    <property type="match status" value="1"/>
</dbReference>
<dbReference type="PANTHER" id="PTHR31437">
    <property type="entry name" value="SREK1IP1 FAMILY MEMBER"/>
    <property type="match status" value="1"/>
</dbReference>
<dbReference type="Pfam" id="PF13917">
    <property type="entry name" value="zf-CCHC_3"/>
    <property type="match status" value="1"/>
</dbReference>
<dbReference type="PROSITE" id="PS50158">
    <property type="entry name" value="ZF_CCHC"/>
    <property type="match status" value="1"/>
</dbReference>
<reference key="1">
    <citation type="journal article" date="2004" name="J. Mol. Neurosci.">
        <title>The splicing regulatory protein p18SRP is down-regulated in Alzheimer's disease brain.</title>
        <authorList>
            <person name="Heese K."/>
            <person name="Fujita M."/>
            <person name="Akatsu H."/>
            <person name="Yamamoto T."/>
            <person name="Kosaka K."/>
            <person name="Nagai Y."/>
            <person name="Sawada T."/>
        </authorList>
    </citation>
    <scope>NUCLEOTIDE SEQUENCE [MRNA]</scope>
</reference>
<reference key="2">
    <citation type="journal article" date="2004" name="Genome Res.">
        <title>The status, quality, and expansion of the NIH full-length cDNA project: the Mammalian Gene Collection (MGC).</title>
        <authorList>
            <consortium name="The MGC Project Team"/>
        </authorList>
    </citation>
    <scope>NUCLEOTIDE SEQUENCE [LARGE SCALE MRNA]</scope>
    <source>
        <tissue>Ovary</tissue>
    </source>
</reference>
<sequence>MAVPGCNKDNVRAGCRKCGYPGHLTFECRNFLRVDPKRDIVLDVSSTSSEDSDEESEELNKLQALQEKRINEEEEKKKEKSREKIKLKKKRKRSNSSTTEEDSSKQKKQKYQKKEKKKEKKNKSKKGKHHKKEKKKRKKEKRSSPNRSEVTKK</sequence>
<evidence type="ECO:0000250" key="1"/>
<evidence type="ECO:0000250" key="2">
    <source>
        <dbReference type="UniProtKB" id="Q4V9W2"/>
    </source>
</evidence>
<evidence type="ECO:0000250" key="3">
    <source>
        <dbReference type="UniProtKB" id="Q8N9Q2"/>
    </source>
</evidence>
<evidence type="ECO:0000255" key="4">
    <source>
        <dbReference type="PROSITE-ProRule" id="PRU00047"/>
    </source>
</evidence>
<evidence type="ECO:0000256" key="5">
    <source>
        <dbReference type="SAM" id="MobiDB-lite"/>
    </source>
</evidence>
<organism>
    <name type="scientific">Rattus norvegicus</name>
    <name type="common">Rat</name>
    <dbReference type="NCBI Taxonomy" id="10116"/>
    <lineage>
        <taxon>Eukaryota</taxon>
        <taxon>Metazoa</taxon>
        <taxon>Chordata</taxon>
        <taxon>Craniata</taxon>
        <taxon>Vertebrata</taxon>
        <taxon>Euteleostomi</taxon>
        <taxon>Mammalia</taxon>
        <taxon>Eutheria</taxon>
        <taxon>Euarchontoglires</taxon>
        <taxon>Glires</taxon>
        <taxon>Rodentia</taxon>
        <taxon>Myomorpha</taxon>
        <taxon>Muroidea</taxon>
        <taxon>Muridae</taxon>
        <taxon>Murinae</taxon>
        <taxon>Rattus</taxon>
    </lineage>
</organism>